<name>SCO1_MOUSE</name>
<proteinExistence type="evidence at protein level"/>
<sequence length="284" mass="31617">MAALVRAAVVRSQCRQLWRLFPRGHGLRDVAERPRPEEACSCLRSRAFSAGPPPPGAGPEPKGGQAGSHRPKPGPVSWKSLALTFAIGGSLLAGMKYFKKEKIEKLEKQRHRSIGKPLLGGPFSLTTHNGEPKTDKDYLGQWVLIYFGFTHCPDICPEELEKMIEVVEEIDSIPSLPNLTPLFITIDPERDTKEAIATYVKEFSPKLVGLTGTKEEIDGVARAYRVYYSPGPKDEDEDYIVDHTIIMYLIGPDGEFLDYFGQNKKKAEIAGSIAAHMRSHMKKR</sequence>
<protein>
    <recommendedName>
        <fullName>Protein SCO1 homolog, mitochondrial</fullName>
    </recommendedName>
</protein>
<dbReference type="EMBL" id="AL645988">
    <property type="status" value="NOT_ANNOTATED_CDS"/>
    <property type="molecule type" value="Genomic_DNA"/>
</dbReference>
<dbReference type="EMBL" id="BC139008">
    <property type="protein sequence ID" value="AAI39009.1"/>
    <property type="molecule type" value="mRNA"/>
</dbReference>
<dbReference type="EMBL" id="BC139009">
    <property type="protein sequence ID" value="AAI39010.1"/>
    <property type="molecule type" value="mRNA"/>
</dbReference>
<dbReference type="EMBL" id="AK139512">
    <property type="protein sequence ID" value="BAE24044.1"/>
    <property type="molecule type" value="mRNA"/>
</dbReference>
<dbReference type="CCDS" id="CCDS36183.1"/>
<dbReference type="RefSeq" id="NP_001035115.1">
    <property type="nucleotide sequence ID" value="NM_001040026.1"/>
</dbReference>
<dbReference type="SMR" id="Q5SUC9"/>
<dbReference type="BioGRID" id="206870">
    <property type="interactions" value="38"/>
</dbReference>
<dbReference type="FunCoup" id="Q5SUC9">
    <property type="interactions" value="2124"/>
</dbReference>
<dbReference type="STRING" id="10090.ENSMUSP00000090673"/>
<dbReference type="iPTMnet" id="Q5SUC9"/>
<dbReference type="PhosphoSitePlus" id="Q5SUC9"/>
<dbReference type="SwissPalm" id="Q5SUC9"/>
<dbReference type="jPOST" id="Q5SUC9"/>
<dbReference type="PaxDb" id="10090-ENSMUSP00000090673"/>
<dbReference type="PeptideAtlas" id="Q5SUC9"/>
<dbReference type="ProteomicsDB" id="255364"/>
<dbReference type="Pumba" id="Q5SUC9"/>
<dbReference type="Antibodypedia" id="12932">
    <property type="antibodies" value="155 antibodies from 30 providers"/>
</dbReference>
<dbReference type="Ensembl" id="ENSMUST00000092996.5">
    <property type="protein sequence ID" value="ENSMUSP00000090673.5"/>
    <property type="gene ID" value="ENSMUSG00000069844.13"/>
</dbReference>
<dbReference type="GeneID" id="52892"/>
<dbReference type="KEGG" id="mmu:52892"/>
<dbReference type="UCSC" id="uc007jlu.1">
    <property type="organism name" value="mouse"/>
</dbReference>
<dbReference type="AGR" id="MGI:106362"/>
<dbReference type="CTD" id="6341"/>
<dbReference type="MGI" id="MGI:106362">
    <property type="gene designation" value="Sco1"/>
</dbReference>
<dbReference type="VEuPathDB" id="HostDB:ENSMUSG00000069844"/>
<dbReference type="eggNOG" id="KOG2792">
    <property type="taxonomic scope" value="Eukaryota"/>
</dbReference>
<dbReference type="GeneTree" id="ENSGT00390000004323"/>
<dbReference type="HOGENOM" id="CLU_050131_0_3_1"/>
<dbReference type="InParanoid" id="Q5SUC9"/>
<dbReference type="OMA" id="MLYFRVE"/>
<dbReference type="OrthoDB" id="270009at2759"/>
<dbReference type="PhylomeDB" id="Q5SUC9"/>
<dbReference type="TreeFam" id="TF313752"/>
<dbReference type="Reactome" id="R-MMU-9864848">
    <property type="pathway name" value="Complex IV assembly"/>
</dbReference>
<dbReference type="BioGRID-ORCS" id="52892">
    <property type="hits" value="21 hits in 75 CRISPR screens"/>
</dbReference>
<dbReference type="ChiTaRS" id="Kit">
    <property type="organism name" value="mouse"/>
</dbReference>
<dbReference type="PRO" id="PR:Q5SUC9"/>
<dbReference type="Proteomes" id="UP000000589">
    <property type="component" value="Chromosome 11"/>
</dbReference>
<dbReference type="RNAct" id="Q5SUC9">
    <property type="molecule type" value="protein"/>
</dbReference>
<dbReference type="Bgee" id="ENSMUSG00000069844">
    <property type="expression patterns" value="Expressed in interventricular septum and 173 other cell types or tissues"/>
</dbReference>
<dbReference type="ExpressionAtlas" id="Q5SUC9">
    <property type="expression patterns" value="baseline and differential"/>
</dbReference>
<dbReference type="GO" id="GO:0005743">
    <property type="term" value="C:mitochondrial inner membrane"/>
    <property type="evidence" value="ECO:0000250"/>
    <property type="project" value="UniProtKB"/>
</dbReference>
<dbReference type="GO" id="GO:0005739">
    <property type="term" value="C:mitochondrion"/>
    <property type="evidence" value="ECO:0000314"/>
    <property type="project" value="MGI"/>
</dbReference>
<dbReference type="GO" id="GO:0030016">
    <property type="term" value="C:myofibril"/>
    <property type="evidence" value="ECO:0000266"/>
    <property type="project" value="MGI"/>
</dbReference>
<dbReference type="GO" id="GO:0046872">
    <property type="term" value="F:metal ion binding"/>
    <property type="evidence" value="ECO:0007669"/>
    <property type="project" value="UniProtKB-KW"/>
</dbReference>
<dbReference type="GO" id="GO:0055070">
    <property type="term" value="P:copper ion homeostasis"/>
    <property type="evidence" value="ECO:0000315"/>
    <property type="project" value="MGI"/>
</dbReference>
<dbReference type="GO" id="GO:0019371">
    <property type="term" value="P:cyclooxygenase pathway"/>
    <property type="evidence" value="ECO:0000315"/>
    <property type="project" value="MGI"/>
</dbReference>
<dbReference type="GO" id="GO:0010467">
    <property type="term" value="P:gene expression"/>
    <property type="evidence" value="ECO:0000315"/>
    <property type="project" value="MGI"/>
</dbReference>
<dbReference type="GO" id="GO:0048872">
    <property type="term" value="P:homeostasis of number of cells"/>
    <property type="evidence" value="ECO:0000315"/>
    <property type="project" value="MGI"/>
</dbReference>
<dbReference type="GO" id="GO:0006955">
    <property type="term" value="P:immune response"/>
    <property type="evidence" value="ECO:0000315"/>
    <property type="project" value="MGI"/>
</dbReference>
<dbReference type="GO" id="GO:0006878">
    <property type="term" value="P:intracellular copper ion homeostasis"/>
    <property type="evidence" value="ECO:0000314"/>
    <property type="project" value="MGI"/>
</dbReference>
<dbReference type="GO" id="GO:0006879">
    <property type="term" value="P:intracellular iron ion homeostasis"/>
    <property type="evidence" value="ECO:0000315"/>
    <property type="project" value="MGI"/>
</dbReference>
<dbReference type="GO" id="GO:0006882">
    <property type="term" value="P:intracellular zinc ion homeostasis"/>
    <property type="evidence" value="ECO:0000315"/>
    <property type="project" value="MGI"/>
</dbReference>
<dbReference type="GO" id="GO:0002521">
    <property type="term" value="P:leukocyte differentiation"/>
    <property type="evidence" value="ECO:0000315"/>
    <property type="project" value="MGI"/>
</dbReference>
<dbReference type="GO" id="GO:0016042">
    <property type="term" value="P:lipid catabolic process"/>
    <property type="evidence" value="ECO:0000315"/>
    <property type="project" value="MGI"/>
</dbReference>
<dbReference type="GO" id="GO:0001889">
    <property type="term" value="P:liver development"/>
    <property type="evidence" value="ECO:0000315"/>
    <property type="project" value="MGI"/>
</dbReference>
<dbReference type="GO" id="GO:0033617">
    <property type="term" value="P:mitochondrial cytochrome c oxidase assembly"/>
    <property type="evidence" value="ECO:0000315"/>
    <property type="project" value="MGI"/>
</dbReference>
<dbReference type="GO" id="GO:0007005">
    <property type="term" value="P:mitochondrion organization"/>
    <property type="evidence" value="ECO:0000315"/>
    <property type="project" value="MGI"/>
</dbReference>
<dbReference type="GO" id="GO:0035264">
    <property type="term" value="P:multicellular organism growth"/>
    <property type="evidence" value="ECO:0000315"/>
    <property type="project" value="MGI"/>
</dbReference>
<dbReference type="GO" id="GO:1900077">
    <property type="term" value="P:negative regulation of cellular response to insulin stimulus"/>
    <property type="evidence" value="ECO:0000314"/>
    <property type="project" value="MGI"/>
</dbReference>
<dbReference type="GO" id="GO:0051898">
    <property type="term" value="P:negative regulation of phosphatidylinositol 3-kinase/protein kinase B signal transduction"/>
    <property type="evidence" value="ECO:0000314"/>
    <property type="project" value="MGI"/>
</dbReference>
<dbReference type="GO" id="GO:1901799">
    <property type="term" value="P:negative regulation of proteasomal protein catabolic process"/>
    <property type="evidence" value="ECO:0000315"/>
    <property type="project" value="MGI"/>
</dbReference>
<dbReference type="GO" id="GO:1905291">
    <property type="term" value="P:positive regulation of CAMKK-AMPK signaling cascade"/>
    <property type="evidence" value="ECO:0000315"/>
    <property type="project" value="MGI"/>
</dbReference>
<dbReference type="GO" id="GO:0010608">
    <property type="term" value="P:post-transcriptional regulation of gene expression"/>
    <property type="evidence" value="ECO:0000314"/>
    <property type="project" value="MGI"/>
</dbReference>
<dbReference type="GO" id="GO:0010498">
    <property type="term" value="P:proteasomal protein catabolic process"/>
    <property type="evidence" value="ECO:0000315"/>
    <property type="project" value="MGI"/>
</dbReference>
<dbReference type="GO" id="GO:0072659">
    <property type="term" value="P:protein localization to plasma membrane"/>
    <property type="evidence" value="ECO:0000315"/>
    <property type="project" value="MGI"/>
</dbReference>
<dbReference type="GO" id="GO:0009306">
    <property type="term" value="P:protein secretion"/>
    <property type="evidence" value="ECO:0000315"/>
    <property type="project" value="MGI"/>
</dbReference>
<dbReference type="GO" id="GO:0048536">
    <property type="term" value="P:spleen development"/>
    <property type="evidence" value="ECO:0000315"/>
    <property type="project" value="MGI"/>
</dbReference>
<dbReference type="GO" id="GO:0048538">
    <property type="term" value="P:thymus development"/>
    <property type="evidence" value="ECO:0000315"/>
    <property type="project" value="MGI"/>
</dbReference>
<dbReference type="CDD" id="cd02968">
    <property type="entry name" value="SCO"/>
    <property type="match status" value="1"/>
</dbReference>
<dbReference type="FunFam" id="3.40.30.10:FF:000013">
    <property type="entry name" value="Blast:Protein SCO1 homolog, mitochondrial"/>
    <property type="match status" value="1"/>
</dbReference>
<dbReference type="Gene3D" id="3.40.30.10">
    <property type="entry name" value="Glutaredoxin"/>
    <property type="match status" value="1"/>
</dbReference>
<dbReference type="InterPro" id="IPR003782">
    <property type="entry name" value="SCO1/SenC"/>
</dbReference>
<dbReference type="InterPro" id="IPR036249">
    <property type="entry name" value="Thioredoxin-like_sf"/>
</dbReference>
<dbReference type="InterPro" id="IPR013766">
    <property type="entry name" value="Thioredoxin_domain"/>
</dbReference>
<dbReference type="PANTHER" id="PTHR12151">
    <property type="entry name" value="ELECTRON TRANSPORT PROTIN SCO1/SENC FAMILY MEMBER"/>
    <property type="match status" value="1"/>
</dbReference>
<dbReference type="PANTHER" id="PTHR12151:SF4">
    <property type="entry name" value="PROTEIN SCO1 HOMOLOG, MITOCHONDRIAL"/>
    <property type="match status" value="1"/>
</dbReference>
<dbReference type="Pfam" id="PF02630">
    <property type="entry name" value="SCO1-SenC"/>
    <property type="match status" value="1"/>
</dbReference>
<dbReference type="SUPFAM" id="SSF52833">
    <property type="entry name" value="Thioredoxin-like"/>
    <property type="match status" value="1"/>
</dbReference>
<dbReference type="PROSITE" id="PS51352">
    <property type="entry name" value="THIOREDOXIN_2"/>
    <property type="match status" value="1"/>
</dbReference>
<organism>
    <name type="scientific">Mus musculus</name>
    <name type="common">Mouse</name>
    <dbReference type="NCBI Taxonomy" id="10090"/>
    <lineage>
        <taxon>Eukaryota</taxon>
        <taxon>Metazoa</taxon>
        <taxon>Chordata</taxon>
        <taxon>Craniata</taxon>
        <taxon>Vertebrata</taxon>
        <taxon>Euteleostomi</taxon>
        <taxon>Mammalia</taxon>
        <taxon>Eutheria</taxon>
        <taxon>Euarchontoglires</taxon>
        <taxon>Glires</taxon>
        <taxon>Rodentia</taxon>
        <taxon>Myomorpha</taxon>
        <taxon>Muroidea</taxon>
        <taxon>Muridae</taxon>
        <taxon>Murinae</taxon>
        <taxon>Mus</taxon>
        <taxon>Mus</taxon>
    </lineage>
</organism>
<feature type="transit peptide" description="Mitochondrion" evidence="3">
    <location>
        <begin position="1"/>
        <end status="unknown"/>
    </location>
</feature>
<feature type="chain" id="PRO_0000354066" description="Protein SCO1 homolog, mitochondrial">
    <location>
        <begin status="unknown"/>
        <end position="284"/>
    </location>
</feature>
<feature type="topological domain" description="Mitochondrial matrix" evidence="2">
    <location>
        <begin status="unknown"/>
        <end position="80"/>
    </location>
</feature>
<feature type="transmembrane region" description="Helical" evidence="3">
    <location>
        <begin position="81"/>
        <end position="98"/>
    </location>
</feature>
<feature type="topological domain" description="Mitochondrial intermembrane" evidence="2">
    <location>
        <begin position="99"/>
        <end position="284"/>
    </location>
</feature>
<feature type="region of interest" description="Disordered" evidence="5">
    <location>
        <begin position="46"/>
        <end position="73"/>
    </location>
</feature>
<feature type="region of interest" description="Important for dimerization" evidence="1">
    <location>
        <begin position="101"/>
        <end position="114"/>
    </location>
</feature>
<feature type="binding site" evidence="1">
    <location>
        <position position="152"/>
    </location>
    <ligand>
        <name>Cu cation</name>
        <dbReference type="ChEBI" id="CHEBI:23378"/>
    </ligand>
</feature>
<feature type="binding site" evidence="1">
    <location>
        <position position="156"/>
    </location>
    <ligand>
        <name>Cu cation</name>
        <dbReference type="ChEBI" id="CHEBI:23378"/>
    </ligand>
</feature>
<feature type="binding site" evidence="1">
    <location>
        <position position="243"/>
    </location>
    <ligand>
        <name>Cu cation</name>
        <dbReference type="ChEBI" id="CHEBI:23378"/>
    </ligand>
</feature>
<feature type="disulfide bond" description="Redox-active" evidence="4">
    <location>
        <begin position="152"/>
        <end position="156"/>
    </location>
</feature>
<feature type="mutagenesis site" description="Knockin mice hearts exhibit a severe combined COX and copper deficiency and a mislocalization of copper transporter protein CTR1 to the cytoplasm." evidence="7">
    <original>G</original>
    <variation>S</variation>
    <location>
        <position position="115"/>
    </location>
</feature>
<gene>
    <name type="primary">Sco1</name>
</gene>
<accession>Q5SUC9</accession>
<accession>Q3UTD6</accession>
<reference key="1">
    <citation type="journal article" date="2009" name="PLoS Biol.">
        <title>Lineage-specific biology revealed by a finished genome assembly of the mouse.</title>
        <authorList>
            <person name="Church D.M."/>
            <person name="Goodstadt L."/>
            <person name="Hillier L.W."/>
            <person name="Zody M.C."/>
            <person name="Goldstein S."/>
            <person name="She X."/>
            <person name="Bult C.J."/>
            <person name="Agarwala R."/>
            <person name="Cherry J.L."/>
            <person name="DiCuccio M."/>
            <person name="Hlavina W."/>
            <person name="Kapustin Y."/>
            <person name="Meric P."/>
            <person name="Maglott D."/>
            <person name="Birtle Z."/>
            <person name="Marques A.C."/>
            <person name="Graves T."/>
            <person name="Zhou S."/>
            <person name="Teague B."/>
            <person name="Potamousis K."/>
            <person name="Churas C."/>
            <person name="Place M."/>
            <person name="Herschleb J."/>
            <person name="Runnheim R."/>
            <person name="Forrest D."/>
            <person name="Amos-Landgraf J."/>
            <person name="Schwartz D.C."/>
            <person name="Cheng Z."/>
            <person name="Lindblad-Toh K."/>
            <person name="Eichler E.E."/>
            <person name="Ponting C.P."/>
        </authorList>
    </citation>
    <scope>NUCLEOTIDE SEQUENCE [LARGE SCALE GENOMIC DNA]</scope>
    <source>
        <strain>C57BL/6J</strain>
    </source>
</reference>
<reference key="2">
    <citation type="journal article" date="2004" name="Genome Res.">
        <title>The status, quality, and expansion of the NIH full-length cDNA project: the Mammalian Gene Collection (MGC).</title>
        <authorList>
            <consortium name="The MGC Project Team"/>
        </authorList>
    </citation>
    <scope>NUCLEOTIDE SEQUENCE [LARGE SCALE MRNA]</scope>
    <source>
        <tissue>Brain</tissue>
    </source>
</reference>
<reference key="3">
    <citation type="journal article" date="2005" name="Science">
        <title>The transcriptional landscape of the mammalian genome.</title>
        <authorList>
            <person name="Carninci P."/>
            <person name="Kasukawa T."/>
            <person name="Katayama S."/>
            <person name="Gough J."/>
            <person name="Frith M.C."/>
            <person name="Maeda N."/>
            <person name="Oyama R."/>
            <person name="Ravasi T."/>
            <person name="Lenhard B."/>
            <person name="Wells C."/>
            <person name="Kodzius R."/>
            <person name="Shimokawa K."/>
            <person name="Bajic V.B."/>
            <person name="Brenner S.E."/>
            <person name="Batalov S."/>
            <person name="Forrest A.R."/>
            <person name="Zavolan M."/>
            <person name="Davis M.J."/>
            <person name="Wilming L.G."/>
            <person name="Aidinis V."/>
            <person name="Allen J.E."/>
            <person name="Ambesi-Impiombato A."/>
            <person name="Apweiler R."/>
            <person name="Aturaliya R.N."/>
            <person name="Bailey T.L."/>
            <person name="Bansal M."/>
            <person name="Baxter L."/>
            <person name="Beisel K.W."/>
            <person name="Bersano T."/>
            <person name="Bono H."/>
            <person name="Chalk A.M."/>
            <person name="Chiu K.P."/>
            <person name="Choudhary V."/>
            <person name="Christoffels A."/>
            <person name="Clutterbuck D.R."/>
            <person name="Crowe M.L."/>
            <person name="Dalla E."/>
            <person name="Dalrymple B.P."/>
            <person name="de Bono B."/>
            <person name="Della Gatta G."/>
            <person name="di Bernardo D."/>
            <person name="Down T."/>
            <person name="Engstrom P."/>
            <person name="Fagiolini M."/>
            <person name="Faulkner G."/>
            <person name="Fletcher C.F."/>
            <person name="Fukushima T."/>
            <person name="Furuno M."/>
            <person name="Futaki S."/>
            <person name="Gariboldi M."/>
            <person name="Georgii-Hemming P."/>
            <person name="Gingeras T.R."/>
            <person name="Gojobori T."/>
            <person name="Green R.E."/>
            <person name="Gustincich S."/>
            <person name="Harbers M."/>
            <person name="Hayashi Y."/>
            <person name="Hensch T.K."/>
            <person name="Hirokawa N."/>
            <person name="Hill D."/>
            <person name="Huminiecki L."/>
            <person name="Iacono M."/>
            <person name="Ikeo K."/>
            <person name="Iwama A."/>
            <person name="Ishikawa T."/>
            <person name="Jakt M."/>
            <person name="Kanapin A."/>
            <person name="Katoh M."/>
            <person name="Kawasawa Y."/>
            <person name="Kelso J."/>
            <person name="Kitamura H."/>
            <person name="Kitano H."/>
            <person name="Kollias G."/>
            <person name="Krishnan S.P."/>
            <person name="Kruger A."/>
            <person name="Kummerfeld S.K."/>
            <person name="Kurochkin I.V."/>
            <person name="Lareau L.F."/>
            <person name="Lazarevic D."/>
            <person name="Lipovich L."/>
            <person name="Liu J."/>
            <person name="Liuni S."/>
            <person name="McWilliam S."/>
            <person name="Madan Babu M."/>
            <person name="Madera M."/>
            <person name="Marchionni L."/>
            <person name="Matsuda H."/>
            <person name="Matsuzawa S."/>
            <person name="Miki H."/>
            <person name="Mignone F."/>
            <person name="Miyake S."/>
            <person name="Morris K."/>
            <person name="Mottagui-Tabar S."/>
            <person name="Mulder N."/>
            <person name="Nakano N."/>
            <person name="Nakauchi H."/>
            <person name="Ng P."/>
            <person name="Nilsson R."/>
            <person name="Nishiguchi S."/>
            <person name="Nishikawa S."/>
            <person name="Nori F."/>
            <person name="Ohara O."/>
            <person name="Okazaki Y."/>
            <person name="Orlando V."/>
            <person name="Pang K.C."/>
            <person name="Pavan W.J."/>
            <person name="Pavesi G."/>
            <person name="Pesole G."/>
            <person name="Petrovsky N."/>
            <person name="Piazza S."/>
            <person name="Reed J."/>
            <person name="Reid J.F."/>
            <person name="Ring B.Z."/>
            <person name="Ringwald M."/>
            <person name="Rost B."/>
            <person name="Ruan Y."/>
            <person name="Salzberg S.L."/>
            <person name="Sandelin A."/>
            <person name="Schneider C."/>
            <person name="Schoenbach C."/>
            <person name="Sekiguchi K."/>
            <person name="Semple C.A."/>
            <person name="Seno S."/>
            <person name="Sessa L."/>
            <person name="Sheng Y."/>
            <person name="Shibata Y."/>
            <person name="Shimada H."/>
            <person name="Shimada K."/>
            <person name="Silva D."/>
            <person name="Sinclair B."/>
            <person name="Sperling S."/>
            <person name="Stupka E."/>
            <person name="Sugiura K."/>
            <person name="Sultana R."/>
            <person name="Takenaka Y."/>
            <person name="Taki K."/>
            <person name="Tammoja K."/>
            <person name="Tan S.L."/>
            <person name="Tang S."/>
            <person name="Taylor M.S."/>
            <person name="Tegner J."/>
            <person name="Teichmann S.A."/>
            <person name="Ueda H.R."/>
            <person name="van Nimwegen E."/>
            <person name="Verardo R."/>
            <person name="Wei C.L."/>
            <person name="Yagi K."/>
            <person name="Yamanishi H."/>
            <person name="Zabarovsky E."/>
            <person name="Zhu S."/>
            <person name="Zimmer A."/>
            <person name="Hide W."/>
            <person name="Bult C."/>
            <person name="Grimmond S.M."/>
            <person name="Teasdale R.D."/>
            <person name="Liu E.T."/>
            <person name="Brusic V."/>
            <person name="Quackenbush J."/>
            <person name="Wahlestedt C."/>
            <person name="Mattick J.S."/>
            <person name="Hume D.A."/>
            <person name="Kai C."/>
            <person name="Sasaki D."/>
            <person name="Tomaru Y."/>
            <person name="Fukuda S."/>
            <person name="Kanamori-Katayama M."/>
            <person name="Suzuki M."/>
            <person name="Aoki J."/>
            <person name="Arakawa T."/>
            <person name="Iida J."/>
            <person name="Imamura K."/>
            <person name="Itoh M."/>
            <person name="Kato T."/>
            <person name="Kawaji H."/>
            <person name="Kawagashira N."/>
            <person name="Kawashima T."/>
            <person name="Kojima M."/>
            <person name="Kondo S."/>
            <person name="Konno H."/>
            <person name="Nakano K."/>
            <person name="Ninomiya N."/>
            <person name="Nishio T."/>
            <person name="Okada M."/>
            <person name="Plessy C."/>
            <person name="Shibata K."/>
            <person name="Shiraki T."/>
            <person name="Suzuki S."/>
            <person name="Tagami M."/>
            <person name="Waki K."/>
            <person name="Watahiki A."/>
            <person name="Okamura-Oho Y."/>
            <person name="Suzuki H."/>
            <person name="Kawai J."/>
            <person name="Hayashizaki Y."/>
        </authorList>
    </citation>
    <scope>NUCLEOTIDE SEQUENCE [LARGE SCALE MRNA] OF 3-284</scope>
    <source>
        <strain>C57BL/6J</strain>
        <tissue>Egg</tissue>
    </source>
</reference>
<reference key="4">
    <citation type="journal article" date="2010" name="Cell">
        <title>A tissue-specific atlas of mouse protein phosphorylation and expression.</title>
        <authorList>
            <person name="Huttlin E.L."/>
            <person name="Jedrychowski M.P."/>
            <person name="Elias J.E."/>
            <person name="Goswami T."/>
            <person name="Rad R."/>
            <person name="Beausoleil S.A."/>
            <person name="Villen J."/>
            <person name="Haas W."/>
            <person name="Sowa M.E."/>
            <person name="Gygi S.P."/>
        </authorList>
    </citation>
    <scope>IDENTIFICATION BY MASS SPECTROMETRY [LARGE SCALE ANALYSIS]</scope>
    <source>
        <tissue>Heart</tissue>
        <tissue>Kidney</tissue>
        <tissue>Liver</tissue>
    </source>
</reference>
<reference key="5">
    <citation type="journal article" date="2015" name="Cell Rep.">
        <title>The mitochondrial metallochaperone SCO1 is required to sustain expression of the high-affinity copper transporter CTR1 and preserve copper homeostasis.</title>
        <authorList>
            <person name="Hlynialuk C.J."/>
            <person name="Ling B."/>
            <person name="Baker Z.N."/>
            <person name="Cobine P.A."/>
            <person name="Yu L.D."/>
            <person name="Boulet A."/>
            <person name="Wai T."/>
            <person name="Hossain A."/>
            <person name="El Zawily A.M."/>
            <person name="McFie P.J."/>
            <person name="Stone S.J."/>
            <person name="Diaz F."/>
            <person name="Moraes C.T."/>
            <person name="Viswanathan D."/>
            <person name="Petris M.J."/>
            <person name="Leary S.C."/>
        </authorList>
    </citation>
    <scope>FUNCTION</scope>
    <scope>DISRUPTION PHENOTYPE</scope>
</reference>
<reference key="6">
    <citation type="journal article" date="2017" name="Hum. Mol. Genet.">
        <title>The mitochondrial metallochaperone SCO1 maintains CTR1 at the plasma membrane to preserve copper homeostasis in the murine heart.</title>
        <authorList>
            <person name="Baker Z.N."/>
            <person name="Jett K."/>
            <person name="Boulet A."/>
            <person name="Hossain A."/>
            <person name="Cobine P.A."/>
            <person name="Kim B.E."/>
            <person name="El Zawily A.M."/>
            <person name="Lee L."/>
            <person name="Tibbits G.F."/>
            <person name="Petris M.J."/>
            <person name="Leary S.C."/>
        </authorList>
    </citation>
    <scope>FUNCTION</scope>
    <scope>DISRUPTION PHENOTYPE</scope>
    <scope>MUTAGENESIS OF GLY-115</scope>
</reference>
<evidence type="ECO:0000250" key="1"/>
<evidence type="ECO:0000250" key="2">
    <source>
        <dbReference type="UniProtKB" id="O75880"/>
    </source>
</evidence>
<evidence type="ECO:0000255" key="3"/>
<evidence type="ECO:0000255" key="4">
    <source>
        <dbReference type="PROSITE-ProRule" id="PRU00691"/>
    </source>
</evidence>
<evidence type="ECO:0000256" key="5">
    <source>
        <dbReference type="SAM" id="MobiDB-lite"/>
    </source>
</evidence>
<evidence type="ECO:0000269" key="6">
    <source>
    </source>
</evidence>
<evidence type="ECO:0000269" key="7">
    <source>
    </source>
</evidence>
<evidence type="ECO:0000305" key="8"/>
<keyword id="KW-0143">Chaperone</keyword>
<keyword id="KW-0186">Copper</keyword>
<keyword id="KW-1015">Disulfide bond</keyword>
<keyword id="KW-0472">Membrane</keyword>
<keyword id="KW-0479">Metal-binding</keyword>
<keyword id="KW-0496">Mitochondrion</keyword>
<keyword id="KW-0999">Mitochondrion inner membrane</keyword>
<keyword id="KW-1185">Reference proteome</keyword>
<keyword id="KW-0809">Transit peptide</keyword>
<keyword id="KW-0812">Transmembrane</keyword>
<keyword id="KW-1133">Transmembrane helix</keyword>
<comment type="function">
    <text evidence="2 6 7">Copper metallochaperone essential for the maturation of cytochrome c oxidase subunit II (MT-CO2/COX2). Not required for the synthesis of MT-CO2/COX2 but plays a crucial role in stabilizing MT-CO2/COX2 during its subsequent maturation. Involved in transporting copper to the Cu(A) site on MT-CO2/COX2 (By similarity). Plays an important role in the regulation of copper homeostasis by controlling the abundance and cell membrane localization of copper transporter CTR1 (PubMed:25683716, PubMed:28973536).</text>
</comment>
<comment type="subunit">
    <text evidence="2">Homodimer. Interacts with COA6. Found in a complex with TMEM177, COX20, COA6, MT-CO2/COX2, COX18 and SCO2. Interacts with TMEM177 in a COX20-dependent manner. Interacts with COX20 in a MT-CO2/COX2- and COX18-dependent manner. Interacts with COX16.</text>
</comment>
<comment type="subcellular location">
    <subcellularLocation>
        <location evidence="2">Mitochondrion</location>
    </subcellularLocation>
    <subcellularLocation>
        <location evidence="2">Mitochondrion inner membrane</location>
        <topology evidence="3">Single-pass membrane protein</topology>
    </subcellularLocation>
</comment>
<comment type="disruption phenotype">
    <text evidence="6 7">Heart-specific and striated muscle-specific knockout mice exhibit a lethal phenotype due to a combined COX and copper deficiency that results in a dilated cardiomyopathy. Cardiac copper deficiency is caused by the mislocalization of copper transporter CTR1 to the cytoplasm (PubMed:28973536). Liver-specific knockout mice exhibit a lethal phenotype associated with profound hepatic COX and copper deficiencies. Hepatic copper deficiency is due to reduced localization of CTR1 at the cell membrane and an enhanced proteasomal degradation of CTR1 (PubMed:25683716).</text>
</comment>
<comment type="similarity">
    <text evidence="8">Belongs to the SCO1/2 family.</text>
</comment>